<protein>
    <recommendedName>
        <fullName evidence="1">Endoribonuclease YbeY</fullName>
        <ecNumber evidence="1">3.1.-.-</ecNumber>
    </recommendedName>
</protein>
<organism>
    <name type="scientific">Clavibacter michiganensis subsp. michiganensis (strain NCPPB 382)</name>
    <dbReference type="NCBI Taxonomy" id="443906"/>
    <lineage>
        <taxon>Bacteria</taxon>
        <taxon>Bacillati</taxon>
        <taxon>Actinomycetota</taxon>
        <taxon>Actinomycetes</taxon>
        <taxon>Micrococcales</taxon>
        <taxon>Microbacteriaceae</taxon>
        <taxon>Clavibacter</taxon>
    </lineage>
</organism>
<accession>A5CRB1</accession>
<proteinExistence type="inferred from homology"/>
<evidence type="ECO:0000255" key="1">
    <source>
        <dbReference type="HAMAP-Rule" id="MF_00009"/>
    </source>
</evidence>
<reference key="1">
    <citation type="journal article" date="2008" name="J. Bacteriol.">
        <title>The genome sequence of the tomato-pathogenic actinomycete Clavibacter michiganensis subsp. michiganensis NCPPB382 reveals a large island involved in pathogenicity.</title>
        <authorList>
            <person name="Gartemann K.-H."/>
            <person name="Abt B."/>
            <person name="Bekel T."/>
            <person name="Burger A."/>
            <person name="Engemann J."/>
            <person name="Fluegel M."/>
            <person name="Gaigalat L."/>
            <person name="Goesmann A."/>
            <person name="Graefen I."/>
            <person name="Kalinowski J."/>
            <person name="Kaup O."/>
            <person name="Kirchner O."/>
            <person name="Krause L."/>
            <person name="Linke B."/>
            <person name="McHardy A."/>
            <person name="Meyer F."/>
            <person name="Pohle S."/>
            <person name="Rueckert C."/>
            <person name="Schneiker S."/>
            <person name="Zellermann E.-M."/>
            <person name="Puehler A."/>
            <person name="Eichenlaub R."/>
            <person name="Kaiser O."/>
            <person name="Bartels D."/>
        </authorList>
    </citation>
    <scope>NUCLEOTIDE SEQUENCE [LARGE SCALE GENOMIC DNA]</scope>
    <source>
        <strain>NCPPB 382</strain>
    </source>
</reference>
<keyword id="KW-0963">Cytoplasm</keyword>
<keyword id="KW-0255">Endonuclease</keyword>
<keyword id="KW-0378">Hydrolase</keyword>
<keyword id="KW-0479">Metal-binding</keyword>
<keyword id="KW-0540">Nuclease</keyword>
<keyword id="KW-0690">Ribosome biogenesis</keyword>
<keyword id="KW-0698">rRNA processing</keyword>
<keyword id="KW-0862">Zinc</keyword>
<comment type="function">
    <text evidence="1">Single strand-specific metallo-endoribonuclease involved in late-stage 70S ribosome quality control and in maturation of the 3' terminus of the 16S rRNA.</text>
</comment>
<comment type="cofactor">
    <cofactor evidence="1">
        <name>Zn(2+)</name>
        <dbReference type="ChEBI" id="CHEBI:29105"/>
    </cofactor>
    <text evidence="1">Binds 1 zinc ion.</text>
</comment>
<comment type="subcellular location">
    <subcellularLocation>
        <location evidence="1">Cytoplasm</location>
    </subcellularLocation>
</comment>
<comment type="similarity">
    <text evidence="1">Belongs to the endoribonuclease YbeY family.</text>
</comment>
<feature type="chain" id="PRO_1000000714" description="Endoribonuclease YbeY">
    <location>
        <begin position="1"/>
        <end position="153"/>
    </location>
</feature>
<feature type="binding site" evidence="1">
    <location>
        <position position="116"/>
    </location>
    <ligand>
        <name>Zn(2+)</name>
        <dbReference type="ChEBI" id="CHEBI:29105"/>
        <note>catalytic</note>
    </ligand>
</feature>
<feature type="binding site" evidence="1">
    <location>
        <position position="120"/>
    </location>
    <ligand>
        <name>Zn(2+)</name>
        <dbReference type="ChEBI" id="CHEBI:29105"/>
        <note>catalytic</note>
    </ligand>
</feature>
<feature type="binding site" evidence="1">
    <location>
        <position position="126"/>
    </location>
    <ligand>
        <name>Zn(2+)</name>
        <dbReference type="ChEBI" id="CHEBI:29105"/>
        <note>catalytic</note>
    </ligand>
</feature>
<name>YBEY_CLAM3</name>
<gene>
    <name evidence="1" type="primary">ybeY</name>
    <name type="ordered locus">CMM_1569</name>
</gene>
<sequence>MSIEINNESAIEVDEPVIQRLVTYALDTLHVHPDAELAIVMVDEGAMEQLHVQWMDEPGPTDVLSFPMDELRPGTEDRPTPAGLLGDIVVCPQVAAEQAVTAGHSTMEEILLLTAHGILHLLGFDHAEPDEEREMFGLQRDILIGFAMSERGR</sequence>
<dbReference type="EC" id="3.1.-.-" evidence="1"/>
<dbReference type="EMBL" id="AM711867">
    <property type="protein sequence ID" value="CAN01620.1"/>
    <property type="molecule type" value="Genomic_DNA"/>
</dbReference>
<dbReference type="RefSeq" id="WP_012038256.1">
    <property type="nucleotide sequence ID" value="NC_009480.1"/>
</dbReference>
<dbReference type="SMR" id="A5CRB1"/>
<dbReference type="KEGG" id="cmi:CMM_1569"/>
<dbReference type="eggNOG" id="COG0319">
    <property type="taxonomic scope" value="Bacteria"/>
</dbReference>
<dbReference type="HOGENOM" id="CLU_106710_3_2_11"/>
<dbReference type="OrthoDB" id="9807740at2"/>
<dbReference type="Proteomes" id="UP000001564">
    <property type="component" value="Chromosome"/>
</dbReference>
<dbReference type="GO" id="GO:0005737">
    <property type="term" value="C:cytoplasm"/>
    <property type="evidence" value="ECO:0007669"/>
    <property type="project" value="UniProtKB-SubCell"/>
</dbReference>
<dbReference type="GO" id="GO:0004222">
    <property type="term" value="F:metalloendopeptidase activity"/>
    <property type="evidence" value="ECO:0007669"/>
    <property type="project" value="InterPro"/>
</dbReference>
<dbReference type="GO" id="GO:0004521">
    <property type="term" value="F:RNA endonuclease activity"/>
    <property type="evidence" value="ECO:0007669"/>
    <property type="project" value="UniProtKB-UniRule"/>
</dbReference>
<dbReference type="GO" id="GO:0008270">
    <property type="term" value="F:zinc ion binding"/>
    <property type="evidence" value="ECO:0007669"/>
    <property type="project" value="UniProtKB-UniRule"/>
</dbReference>
<dbReference type="GO" id="GO:0006364">
    <property type="term" value="P:rRNA processing"/>
    <property type="evidence" value="ECO:0007669"/>
    <property type="project" value="UniProtKB-UniRule"/>
</dbReference>
<dbReference type="Gene3D" id="3.40.390.30">
    <property type="entry name" value="Metalloproteases ('zincins'), catalytic domain"/>
    <property type="match status" value="1"/>
</dbReference>
<dbReference type="HAMAP" id="MF_00009">
    <property type="entry name" value="Endoribonucl_YbeY"/>
    <property type="match status" value="1"/>
</dbReference>
<dbReference type="InterPro" id="IPR023091">
    <property type="entry name" value="MetalPrtase_cat_dom_sf_prd"/>
</dbReference>
<dbReference type="InterPro" id="IPR002036">
    <property type="entry name" value="YbeY"/>
</dbReference>
<dbReference type="InterPro" id="IPR020549">
    <property type="entry name" value="YbeY_CS"/>
</dbReference>
<dbReference type="NCBIfam" id="TIGR00043">
    <property type="entry name" value="rRNA maturation RNase YbeY"/>
    <property type="match status" value="1"/>
</dbReference>
<dbReference type="PANTHER" id="PTHR46986">
    <property type="entry name" value="ENDORIBONUCLEASE YBEY, CHLOROPLASTIC"/>
    <property type="match status" value="1"/>
</dbReference>
<dbReference type="PANTHER" id="PTHR46986:SF1">
    <property type="entry name" value="ENDORIBONUCLEASE YBEY, CHLOROPLASTIC"/>
    <property type="match status" value="1"/>
</dbReference>
<dbReference type="Pfam" id="PF02130">
    <property type="entry name" value="YbeY"/>
    <property type="match status" value="1"/>
</dbReference>
<dbReference type="SUPFAM" id="SSF55486">
    <property type="entry name" value="Metalloproteases ('zincins'), catalytic domain"/>
    <property type="match status" value="1"/>
</dbReference>
<dbReference type="PROSITE" id="PS01306">
    <property type="entry name" value="UPF0054"/>
    <property type="match status" value="1"/>
</dbReference>